<comment type="catalytic activity">
    <reaction evidence="1">
        <text>L-methionyl-[protein] + [thioredoxin]-disulfide + H2O = L-methionyl-(R)-S-oxide-[protein] + [thioredoxin]-dithiol</text>
        <dbReference type="Rhea" id="RHEA:24164"/>
        <dbReference type="Rhea" id="RHEA-COMP:10698"/>
        <dbReference type="Rhea" id="RHEA-COMP:10700"/>
        <dbReference type="Rhea" id="RHEA-COMP:12313"/>
        <dbReference type="Rhea" id="RHEA-COMP:12314"/>
        <dbReference type="ChEBI" id="CHEBI:15377"/>
        <dbReference type="ChEBI" id="CHEBI:16044"/>
        <dbReference type="ChEBI" id="CHEBI:29950"/>
        <dbReference type="ChEBI" id="CHEBI:45764"/>
        <dbReference type="ChEBI" id="CHEBI:50058"/>
        <dbReference type="EC" id="1.8.4.12"/>
    </reaction>
</comment>
<comment type="cofactor">
    <cofactor evidence="1">
        <name>Zn(2+)</name>
        <dbReference type="ChEBI" id="CHEBI:29105"/>
    </cofactor>
    <text evidence="1">Binds 1 zinc ion per subunit. The zinc ion is important for the structural integrity of the protein.</text>
</comment>
<comment type="similarity">
    <text evidence="1">Belongs to the MsrB Met sulfoxide reductase family.</text>
</comment>
<protein>
    <recommendedName>
        <fullName evidence="1">Peptide methionine sulfoxide reductase MsrB</fullName>
        <ecNumber evidence="1">1.8.4.12</ecNumber>
    </recommendedName>
    <alternativeName>
        <fullName evidence="1">Peptide-methionine (R)-S-oxide reductase</fullName>
    </alternativeName>
</protein>
<sequence length="131" mass="14623">MDKLQKTLEEWKEMLDPAQYSVCRLKGTERPFSGKYNDTKTAGVYHCICCNEALFDSTTKFDSGCGWPSFYAPLEGSAVVEVRDVSHGMIRTEVVCARCDAHLGHVFPDGPPPTGLRYCINSVCLELVPRE</sequence>
<reference key="1">
    <citation type="journal article" date="2003" name="Proc. Natl. Acad. Sci. U.S.A.">
        <title>The complete genome sequence of the Arabidopsis and tomato pathogen Pseudomonas syringae pv. tomato DC3000.</title>
        <authorList>
            <person name="Buell C.R."/>
            <person name="Joardar V."/>
            <person name="Lindeberg M."/>
            <person name="Selengut J."/>
            <person name="Paulsen I.T."/>
            <person name="Gwinn M.L."/>
            <person name="Dodson R.J."/>
            <person name="DeBoy R.T."/>
            <person name="Durkin A.S."/>
            <person name="Kolonay J.F."/>
            <person name="Madupu R."/>
            <person name="Daugherty S.C."/>
            <person name="Brinkac L.M."/>
            <person name="Beanan M.J."/>
            <person name="Haft D.H."/>
            <person name="Nelson W.C."/>
            <person name="Davidsen T.M."/>
            <person name="Zafar N."/>
            <person name="Zhou L."/>
            <person name="Liu J."/>
            <person name="Yuan Q."/>
            <person name="Khouri H.M."/>
            <person name="Fedorova N.B."/>
            <person name="Tran B."/>
            <person name="Russell D."/>
            <person name="Berry K.J."/>
            <person name="Utterback T.R."/>
            <person name="Van Aken S.E."/>
            <person name="Feldblyum T.V."/>
            <person name="D'Ascenzo M."/>
            <person name="Deng W.-L."/>
            <person name="Ramos A.R."/>
            <person name="Alfano J.R."/>
            <person name="Cartinhour S."/>
            <person name="Chatterjee A.K."/>
            <person name="Delaney T.P."/>
            <person name="Lazarowitz S.G."/>
            <person name="Martin G.B."/>
            <person name="Schneider D.J."/>
            <person name="Tang X."/>
            <person name="Bender C.L."/>
            <person name="White O."/>
            <person name="Fraser C.M."/>
            <person name="Collmer A."/>
        </authorList>
    </citation>
    <scope>NUCLEOTIDE SEQUENCE [LARGE SCALE GENOMIC DNA]</scope>
    <source>
        <strain>ATCC BAA-871 / DC3000</strain>
    </source>
</reference>
<organism>
    <name type="scientific">Pseudomonas syringae pv. tomato (strain ATCC BAA-871 / DC3000)</name>
    <dbReference type="NCBI Taxonomy" id="223283"/>
    <lineage>
        <taxon>Bacteria</taxon>
        <taxon>Pseudomonadati</taxon>
        <taxon>Pseudomonadota</taxon>
        <taxon>Gammaproteobacteria</taxon>
        <taxon>Pseudomonadales</taxon>
        <taxon>Pseudomonadaceae</taxon>
        <taxon>Pseudomonas</taxon>
    </lineage>
</organism>
<name>MSRB_PSESM</name>
<accession>Q885Q1</accession>
<keyword id="KW-0479">Metal-binding</keyword>
<keyword id="KW-0560">Oxidoreductase</keyword>
<keyword id="KW-1185">Reference proteome</keyword>
<keyword id="KW-0862">Zinc</keyword>
<dbReference type="EC" id="1.8.4.12" evidence="1"/>
<dbReference type="EMBL" id="AE016853">
    <property type="protein sequence ID" value="AAO55300.1"/>
    <property type="molecule type" value="Genomic_DNA"/>
</dbReference>
<dbReference type="RefSeq" id="NP_791605.1">
    <property type="nucleotide sequence ID" value="NC_004578.1"/>
</dbReference>
<dbReference type="RefSeq" id="WP_005766799.1">
    <property type="nucleotide sequence ID" value="NC_004578.1"/>
</dbReference>
<dbReference type="SMR" id="Q885Q1"/>
<dbReference type="STRING" id="223283.PSPTO_1780"/>
<dbReference type="GeneID" id="1183417"/>
<dbReference type="KEGG" id="pst:PSPTO_1780"/>
<dbReference type="PATRIC" id="fig|223283.9.peg.1809"/>
<dbReference type="eggNOG" id="COG0229">
    <property type="taxonomic scope" value="Bacteria"/>
</dbReference>
<dbReference type="HOGENOM" id="CLU_031040_8_5_6"/>
<dbReference type="OrthoDB" id="9785497at2"/>
<dbReference type="PhylomeDB" id="Q885Q1"/>
<dbReference type="Proteomes" id="UP000002515">
    <property type="component" value="Chromosome"/>
</dbReference>
<dbReference type="GO" id="GO:0005737">
    <property type="term" value="C:cytoplasm"/>
    <property type="evidence" value="ECO:0007669"/>
    <property type="project" value="TreeGrafter"/>
</dbReference>
<dbReference type="GO" id="GO:0033743">
    <property type="term" value="F:peptide-methionine (R)-S-oxide reductase activity"/>
    <property type="evidence" value="ECO:0007669"/>
    <property type="project" value="UniProtKB-UniRule"/>
</dbReference>
<dbReference type="GO" id="GO:0008270">
    <property type="term" value="F:zinc ion binding"/>
    <property type="evidence" value="ECO:0007669"/>
    <property type="project" value="UniProtKB-UniRule"/>
</dbReference>
<dbReference type="GO" id="GO:0030091">
    <property type="term" value="P:protein repair"/>
    <property type="evidence" value="ECO:0007669"/>
    <property type="project" value="InterPro"/>
</dbReference>
<dbReference type="GO" id="GO:0006979">
    <property type="term" value="P:response to oxidative stress"/>
    <property type="evidence" value="ECO:0007669"/>
    <property type="project" value="InterPro"/>
</dbReference>
<dbReference type="FunFam" id="2.170.150.20:FF:000001">
    <property type="entry name" value="Peptide methionine sulfoxide reductase MsrB"/>
    <property type="match status" value="1"/>
</dbReference>
<dbReference type="Gene3D" id="2.170.150.20">
    <property type="entry name" value="Peptide methionine sulfoxide reductase"/>
    <property type="match status" value="1"/>
</dbReference>
<dbReference type="HAMAP" id="MF_01400">
    <property type="entry name" value="MsrB"/>
    <property type="match status" value="1"/>
</dbReference>
<dbReference type="InterPro" id="IPR028427">
    <property type="entry name" value="Met_Sox_Rdtase_MsrB"/>
</dbReference>
<dbReference type="InterPro" id="IPR002579">
    <property type="entry name" value="Met_Sox_Rdtase_MsrB_dom"/>
</dbReference>
<dbReference type="InterPro" id="IPR011057">
    <property type="entry name" value="Mss4-like_sf"/>
</dbReference>
<dbReference type="NCBIfam" id="TIGR00357">
    <property type="entry name" value="peptide-methionine (R)-S-oxide reductase MsrB"/>
    <property type="match status" value="1"/>
</dbReference>
<dbReference type="PANTHER" id="PTHR10173">
    <property type="entry name" value="METHIONINE SULFOXIDE REDUCTASE"/>
    <property type="match status" value="1"/>
</dbReference>
<dbReference type="PANTHER" id="PTHR10173:SF52">
    <property type="entry name" value="METHIONINE-R-SULFOXIDE REDUCTASE B1"/>
    <property type="match status" value="1"/>
</dbReference>
<dbReference type="Pfam" id="PF01641">
    <property type="entry name" value="SelR"/>
    <property type="match status" value="1"/>
</dbReference>
<dbReference type="SUPFAM" id="SSF51316">
    <property type="entry name" value="Mss4-like"/>
    <property type="match status" value="1"/>
</dbReference>
<dbReference type="PROSITE" id="PS51790">
    <property type="entry name" value="MSRB"/>
    <property type="match status" value="1"/>
</dbReference>
<gene>
    <name evidence="1" type="primary">msrB</name>
    <name type="ordered locus">PSPTO_1780</name>
</gene>
<proteinExistence type="inferred from homology"/>
<feature type="chain" id="PRO_0000140288" description="Peptide methionine sulfoxide reductase MsrB">
    <location>
        <begin position="1"/>
        <end position="131"/>
    </location>
</feature>
<feature type="domain" description="MsrB" evidence="2">
    <location>
        <begin position="8"/>
        <end position="130"/>
    </location>
</feature>
<feature type="active site" description="Nucleophile" evidence="2">
    <location>
        <position position="119"/>
    </location>
</feature>
<feature type="binding site" evidence="2">
    <location>
        <position position="47"/>
    </location>
    <ligand>
        <name>Zn(2+)</name>
        <dbReference type="ChEBI" id="CHEBI:29105"/>
    </ligand>
</feature>
<feature type="binding site" evidence="2">
    <location>
        <position position="50"/>
    </location>
    <ligand>
        <name>Zn(2+)</name>
        <dbReference type="ChEBI" id="CHEBI:29105"/>
    </ligand>
</feature>
<feature type="binding site" evidence="2">
    <location>
        <position position="96"/>
    </location>
    <ligand>
        <name>Zn(2+)</name>
        <dbReference type="ChEBI" id="CHEBI:29105"/>
    </ligand>
</feature>
<feature type="binding site" evidence="2">
    <location>
        <position position="99"/>
    </location>
    <ligand>
        <name>Zn(2+)</name>
        <dbReference type="ChEBI" id="CHEBI:29105"/>
    </ligand>
</feature>
<evidence type="ECO:0000255" key="1">
    <source>
        <dbReference type="HAMAP-Rule" id="MF_01400"/>
    </source>
</evidence>
<evidence type="ECO:0000255" key="2">
    <source>
        <dbReference type="PROSITE-ProRule" id="PRU01126"/>
    </source>
</evidence>